<proteinExistence type="inferred from homology"/>
<comment type="function">
    <text evidence="1">An anti-sigma factor for extracytoplasmic function (ECF) sigma factor SigK. ECF sigma factors are held in an inactive form by an anti-sigma factor until released by regulated intramembrane proteolysis (RIP). RIP occurs when an extracytoplasmic signal triggers a concerted proteolytic cascade to transmit information and elicit cellular responses. The membrane-spanning regulatory substrate protein is first cut extracytoplasmically (site-1 protease, S1P), then within the membrane itself (site-2 protease, S2P, Rip1), while cytoplasmic proteases finish degrading the regulatory protein, liberating the sigma factor (By similarity).</text>
</comment>
<comment type="subcellular location">
    <subcellularLocation>
        <location evidence="3">Cell membrane</location>
        <topology evidence="3">Single-pass membrane protein</topology>
    </subcellularLocation>
</comment>
<comment type="domain">
    <text evidence="1">The cytosolic domain interacts with sigma factor SigK.</text>
</comment>
<comment type="similarity">
    <text evidence="3">Belongs to the anti-sigma-K factor family.</text>
</comment>
<evidence type="ECO:0000250" key="1"/>
<evidence type="ECO:0000255" key="2"/>
<evidence type="ECO:0000305" key="3"/>
<name>RSKA_MYCTA</name>
<gene>
    <name type="primary">rskA</name>
    <name type="ordered locus">MRA_0449</name>
</gene>
<accession>A5TZH0</accession>
<feature type="chain" id="PRO_0000313836" description="Anti-sigma-K factor RskA">
    <location>
        <begin position="1"/>
        <end position="232"/>
    </location>
</feature>
<feature type="topological domain" description="Cytoplasmic" evidence="2">
    <location>
        <begin position="1"/>
        <end position="90"/>
    </location>
</feature>
<feature type="transmembrane region" description="Helical" evidence="2">
    <location>
        <begin position="91"/>
        <end position="111"/>
    </location>
</feature>
<feature type="topological domain" description="Extracellular" evidence="2">
    <location>
        <begin position="112"/>
        <end position="232"/>
    </location>
</feature>
<sequence>MTEHTDFELLELATPYALNAVSDDERADIDRRVAAAPSPVAAAFNDEVRAVRETMAVVSAATTAEPPAHLRTAILDATKPEVRRQSRWRTAAFASAAAIAVGLGAFGLGVLTRPSPPPTVAEQVLTAPDVRTVSRPLGAGTATVVFSRDRNTGLLVMNNVAPPSRGTVYQMWLLGGAKGPRSAGTMGTAAVTPSTTATLTDLGASTALAFTVEPGTGSPQPTGTILAELPLG</sequence>
<organism>
    <name type="scientific">Mycobacterium tuberculosis (strain ATCC 25177 / H37Ra)</name>
    <dbReference type="NCBI Taxonomy" id="419947"/>
    <lineage>
        <taxon>Bacteria</taxon>
        <taxon>Bacillati</taxon>
        <taxon>Actinomycetota</taxon>
        <taxon>Actinomycetes</taxon>
        <taxon>Mycobacteriales</taxon>
        <taxon>Mycobacteriaceae</taxon>
        <taxon>Mycobacterium</taxon>
        <taxon>Mycobacterium tuberculosis complex</taxon>
    </lineage>
</organism>
<dbReference type="EMBL" id="CP000611">
    <property type="protein sequence ID" value="ABQ72170.1"/>
    <property type="molecule type" value="Genomic_DNA"/>
</dbReference>
<dbReference type="RefSeq" id="WP_003898455.1">
    <property type="nucleotide sequence ID" value="NZ_CP016972.1"/>
</dbReference>
<dbReference type="SMR" id="A5TZH0"/>
<dbReference type="KEGG" id="mra:MRA_0449"/>
<dbReference type="eggNOG" id="COG5343">
    <property type="taxonomic scope" value="Bacteria"/>
</dbReference>
<dbReference type="HOGENOM" id="CLU_075802_1_1_11"/>
<dbReference type="Proteomes" id="UP000001988">
    <property type="component" value="Chromosome"/>
</dbReference>
<dbReference type="GO" id="GO:0005886">
    <property type="term" value="C:plasma membrane"/>
    <property type="evidence" value="ECO:0007669"/>
    <property type="project" value="UniProtKB-SubCell"/>
</dbReference>
<dbReference type="GO" id="GO:0016989">
    <property type="term" value="F:sigma factor antagonist activity"/>
    <property type="evidence" value="ECO:0007669"/>
    <property type="project" value="TreeGrafter"/>
</dbReference>
<dbReference type="GO" id="GO:0006417">
    <property type="term" value="P:regulation of translation"/>
    <property type="evidence" value="ECO:0007669"/>
    <property type="project" value="TreeGrafter"/>
</dbReference>
<dbReference type="Gene3D" id="1.10.10.1320">
    <property type="entry name" value="Anti-sigma factor, zinc-finger domain"/>
    <property type="match status" value="1"/>
</dbReference>
<dbReference type="InterPro" id="IPR051474">
    <property type="entry name" value="Anti-sigma-K/W_factor"/>
</dbReference>
<dbReference type="InterPro" id="IPR041916">
    <property type="entry name" value="Anti_sigma_zinc_sf"/>
</dbReference>
<dbReference type="InterPro" id="IPR018764">
    <property type="entry name" value="RskA_C"/>
</dbReference>
<dbReference type="InterPro" id="IPR053877">
    <property type="entry name" value="RskA_N"/>
</dbReference>
<dbReference type="PANTHER" id="PTHR37461">
    <property type="entry name" value="ANTI-SIGMA-K FACTOR RSKA"/>
    <property type="match status" value="1"/>
</dbReference>
<dbReference type="PANTHER" id="PTHR37461:SF1">
    <property type="entry name" value="ANTI-SIGMA-K FACTOR RSKA"/>
    <property type="match status" value="1"/>
</dbReference>
<dbReference type="Pfam" id="PF10099">
    <property type="entry name" value="RskA_C"/>
    <property type="match status" value="1"/>
</dbReference>
<dbReference type="Pfam" id="PF22618">
    <property type="entry name" value="RskA_N"/>
    <property type="match status" value="1"/>
</dbReference>
<protein>
    <recommendedName>
        <fullName>Anti-sigma-K factor RskA</fullName>
    </recommendedName>
    <alternativeName>
        <fullName>Regulator of SigK</fullName>
    </alternativeName>
    <alternativeName>
        <fullName>Sigma-K anti-sigma factor RskA</fullName>
    </alternativeName>
</protein>
<keyword id="KW-1003">Cell membrane</keyword>
<keyword id="KW-0472">Membrane</keyword>
<keyword id="KW-1185">Reference proteome</keyword>
<keyword id="KW-0804">Transcription</keyword>
<keyword id="KW-0805">Transcription regulation</keyword>
<keyword id="KW-0812">Transmembrane</keyword>
<keyword id="KW-1133">Transmembrane helix</keyword>
<reference key="1">
    <citation type="journal article" date="2008" name="PLoS ONE">
        <title>Genetic basis of virulence attenuation revealed by comparative genomic analysis of Mycobacterium tuberculosis strain H37Ra versus H37Rv.</title>
        <authorList>
            <person name="Zheng H."/>
            <person name="Lu L."/>
            <person name="Wang B."/>
            <person name="Pu S."/>
            <person name="Zhang X."/>
            <person name="Zhu G."/>
            <person name="Shi W."/>
            <person name="Zhang L."/>
            <person name="Wang H."/>
            <person name="Wang S."/>
            <person name="Zhao G."/>
            <person name="Zhang Y."/>
        </authorList>
    </citation>
    <scope>NUCLEOTIDE SEQUENCE [LARGE SCALE GENOMIC DNA]</scope>
    <source>
        <strain>ATCC 25177 / H37Ra</strain>
    </source>
</reference>